<comment type="function">
    <text evidence="1">Could be a nuclease involved in processing of the 5'-end of pre-16S rRNA.</text>
</comment>
<comment type="subcellular location">
    <subcellularLocation>
        <location evidence="1">Cytoplasm</location>
    </subcellularLocation>
</comment>
<comment type="similarity">
    <text evidence="1">Belongs to the YqgF nuclease family.</text>
</comment>
<sequence>MGRIIAIDYGRKRTGIAATDILQMIANGVATVPSGEVVKYLSDYISREPVDLFVVGLRKQMNNEPSENMKYVEAFVTHLKRTIPSIPVTYYDERFTSVLAHKAMLEGGLKKKKRQDKGLVDEISAVIILQAYLESKKYQL</sequence>
<proteinExistence type="inferred from homology"/>
<feature type="chain" id="PRO_1000061548" description="Putative pre-16S rRNA nuclease">
    <location>
        <begin position="1"/>
        <end position="140"/>
    </location>
</feature>
<name>YQGF_PARD8</name>
<accession>A6L9R7</accession>
<keyword id="KW-0963">Cytoplasm</keyword>
<keyword id="KW-0378">Hydrolase</keyword>
<keyword id="KW-0540">Nuclease</keyword>
<keyword id="KW-1185">Reference proteome</keyword>
<keyword id="KW-0690">Ribosome biogenesis</keyword>
<organism>
    <name type="scientific">Parabacteroides distasonis (strain ATCC 8503 / DSM 20701 / CIP 104284 / JCM 5825 / NCTC 11152)</name>
    <dbReference type="NCBI Taxonomy" id="435591"/>
    <lineage>
        <taxon>Bacteria</taxon>
        <taxon>Pseudomonadati</taxon>
        <taxon>Bacteroidota</taxon>
        <taxon>Bacteroidia</taxon>
        <taxon>Bacteroidales</taxon>
        <taxon>Tannerellaceae</taxon>
        <taxon>Parabacteroides</taxon>
    </lineage>
</organism>
<dbReference type="EC" id="3.1.-.-" evidence="1"/>
<dbReference type="EMBL" id="CP000140">
    <property type="protein sequence ID" value="ABR42431.1"/>
    <property type="molecule type" value="Genomic_DNA"/>
</dbReference>
<dbReference type="RefSeq" id="WP_011966113.1">
    <property type="nucleotide sequence ID" value="NC_009615.1"/>
</dbReference>
<dbReference type="SMR" id="A6L9R7"/>
<dbReference type="STRING" id="435591.BDI_0655"/>
<dbReference type="PaxDb" id="435591-BDI_0655"/>
<dbReference type="KEGG" id="pdi:BDI_0655"/>
<dbReference type="PATRIC" id="fig|435591.13.peg.641"/>
<dbReference type="eggNOG" id="COG0816">
    <property type="taxonomic scope" value="Bacteria"/>
</dbReference>
<dbReference type="HOGENOM" id="CLU_098240_2_1_10"/>
<dbReference type="BioCyc" id="PDIS435591:G1G5A-672-MONOMER"/>
<dbReference type="Proteomes" id="UP000000566">
    <property type="component" value="Chromosome"/>
</dbReference>
<dbReference type="GO" id="GO:0005829">
    <property type="term" value="C:cytosol"/>
    <property type="evidence" value="ECO:0007669"/>
    <property type="project" value="TreeGrafter"/>
</dbReference>
<dbReference type="GO" id="GO:0004518">
    <property type="term" value="F:nuclease activity"/>
    <property type="evidence" value="ECO:0007669"/>
    <property type="project" value="UniProtKB-KW"/>
</dbReference>
<dbReference type="GO" id="GO:0000967">
    <property type="term" value="P:rRNA 5'-end processing"/>
    <property type="evidence" value="ECO:0007669"/>
    <property type="project" value="UniProtKB-UniRule"/>
</dbReference>
<dbReference type="CDD" id="cd16964">
    <property type="entry name" value="YqgF"/>
    <property type="match status" value="1"/>
</dbReference>
<dbReference type="Gene3D" id="3.30.420.140">
    <property type="entry name" value="YqgF/RNase H-like domain"/>
    <property type="match status" value="1"/>
</dbReference>
<dbReference type="HAMAP" id="MF_00651">
    <property type="entry name" value="Nuclease_YqgF"/>
    <property type="match status" value="1"/>
</dbReference>
<dbReference type="InterPro" id="IPR012337">
    <property type="entry name" value="RNaseH-like_sf"/>
</dbReference>
<dbReference type="InterPro" id="IPR005227">
    <property type="entry name" value="YqgF"/>
</dbReference>
<dbReference type="InterPro" id="IPR006641">
    <property type="entry name" value="YqgF/RNaseH-like_dom"/>
</dbReference>
<dbReference type="InterPro" id="IPR037027">
    <property type="entry name" value="YqgF/RNaseH-like_dom_sf"/>
</dbReference>
<dbReference type="NCBIfam" id="TIGR00250">
    <property type="entry name" value="RNAse_H_YqgF"/>
    <property type="match status" value="1"/>
</dbReference>
<dbReference type="PANTHER" id="PTHR33317">
    <property type="entry name" value="POLYNUCLEOTIDYL TRANSFERASE, RIBONUCLEASE H-LIKE SUPERFAMILY PROTEIN"/>
    <property type="match status" value="1"/>
</dbReference>
<dbReference type="PANTHER" id="PTHR33317:SF4">
    <property type="entry name" value="POLYNUCLEOTIDYL TRANSFERASE, RIBONUCLEASE H-LIKE SUPERFAMILY PROTEIN"/>
    <property type="match status" value="1"/>
</dbReference>
<dbReference type="Pfam" id="PF03652">
    <property type="entry name" value="RuvX"/>
    <property type="match status" value="1"/>
</dbReference>
<dbReference type="SMART" id="SM00732">
    <property type="entry name" value="YqgFc"/>
    <property type="match status" value="1"/>
</dbReference>
<dbReference type="SUPFAM" id="SSF53098">
    <property type="entry name" value="Ribonuclease H-like"/>
    <property type="match status" value="1"/>
</dbReference>
<evidence type="ECO:0000255" key="1">
    <source>
        <dbReference type="HAMAP-Rule" id="MF_00651"/>
    </source>
</evidence>
<protein>
    <recommendedName>
        <fullName evidence="1">Putative pre-16S rRNA nuclease</fullName>
        <ecNumber evidence="1">3.1.-.-</ecNumber>
    </recommendedName>
</protein>
<gene>
    <name type="ordered locus">BDI_0655</name>
</gene>
<reference key="1">
    <citation type="journal article" date="2007" name="PLoS Biol.">
        <title>Evolution of symbiotic bacteria in the distal human intestine.</title>
        <authorList>
            <person name="Xu J."/>
            <person name="Mahowald M.A."/>
            <person name="Ley R.E."/>
            <person name="Lozupone C.A."/>
            <person name="Hamady M."/>
            <person name="Martens E.C."/>
            <person name="Henrissat B."/>
            <person name="Coutinho P.M."/>
            <person name="Minx P."/>
            <person name="Latreille P."/>
            <person name="Cordum H."/>
            <person name="Van Brunt A."/>
            <person name="Kim K."/>
            <person name="Fulton R.S."/>
            <person name="Fulton L.A."/>
            <person name="Clifton S.W."/>
            <person name="Wilson R.K."/>
            <person name="Knight R.D."/>
            <person name="Gordon J.I."/>
        </authorList>
    </citation>
    <scope>NUCLEOTIDE SEQUENCE [LARGE SCALE GENOMIC DNA]</scope>
    <source>
        <strain>ATCC 8503 / DSM 20701 / CIP 104284 / JCM 5825 / NCTC 11152</strain>
    </source>
</reference>